<protein>
    <recommendedName>
        <fullName>Uncharacterized hydrolase YugF</fullName>
        <ecNumber>3.1.-.-</ecNumber>
    </recommendedName>
</protein>
<organism>
    <name type="scientific">Bacillus subtilis (strain 168)</name>
    <dbReference type="NCBI Taxonomy" id="224308"/>
    <lineage>
        <taxon>Bacteria</taxon>
        <taxon>Bacillati</taxon>
        <taxon>Bacillota</taxon>
        <taxon>Bacilli</taxon>
        <taxon>Bacillales</taxon>
        <taxon>Bacillaceae</taxon>
        <taxon>Bacillus</taxon>
    </lineage>
</organism>
<evidence type="ECO:0000250" key="1"/>
<evidence type="ECO:0000255" key="2"/>
<evidence type="ECO:0000305" key="3"/>
<name>YUGF_BACSU</name>
<sequence>MEAVSPIRRFTVDGVNVYYEHYQNPGRQTLVCVHGFLSSAFSFRKVIPLLRDKYDIIALDLPPFGQSEKSRTFIYTYQNLAKLVIGILEHLQVKQAVLVGHSMGGQISLSAALQKPELFSKVVLLCSSGYLKRSHPTIIFGTHIPYFHLYIKRWLSKEGVMKNLLNVVHDKSLIDEEMIDGYGRPFQDEQIFKAMTRFIRHREGDLEPEQLKKMNKPALLIWGEEDRIVPMEIGKRLHADLPNSVLYSLGQTGHLVPEERPELISEHIADFIK</sequence>
<proteinExistence type="inferred from homology"/>
<reference key="1">
    <citation type="journal article" date="1997" name="Microbiology">
        <title>Analysis of the Bacillus subtilis genome: cloning and nucleotide sequence of a 62 kb region between 275 degrees (rrnB) and 284 degrees (pai).</title>
        <authorList>
            <person name="Oudega B."/>
            <person name="Koningstein G."/>
            <person name="Rodrigues L."/>
            <person name="de Sales Ramon M."/>
            <person name="Hilbert H."/>
            <person name="Duesterhoeft A."/>
            <person name="Pohl T.M."/>
            <person name="Weitzenegger T."/>
        </authorList>
    </citation>
    <scope>NUCLEOTIDE SEQUENCE [GENOMIC DNA]</scope>
    <source>
        <strain>168</strain>
    </source>
</reference>
<reference key="2">
    <citation type="journal article" date="1997" name="Nature">
        <title>The complete genome sequence of the Gram-positive bacterium Bacillus subtilis.</title>
        <authorList>
            <person name="Kunst F."/>
            <person name="Ogasawara N."/>
            <person name="Moszer I."/>
            <person name="Albertini A.M."/>
            <person name="Alloni G."/>
            <person name="Azevedo V."/>
            <person name="Bertero M.G."/>
            <person name="Bessieres P."/>
            <person name="Bolotin A."/>
            <person name="Borchert S."/>
            <person name="Borriss R."/>
            <person name="Boursier L."/>
            <person name="Brans A."/>
            <person name="Braun M."/>
            <person name="Brignell S.C."/>
            <person name="Bron S."/>
            <person name="Brouillet S."/>
            <person name="Bruschi C.V."/>
            <person name="Caldwell B."/>
            <person name="Capuano V."/>
            <person name="Carter N.M."/>
            <person name="Choi S.-K."/>
            <person name="Codani J.-J."/>
            <person name="Connerton I.F."/>
            <person name="Cummings N.J."/>
            <person name="Daniel R.A."/>
            <person name="Denizot F."/>
            <person name="Devine K.M."/>
            <person name="Duesterhoeft A."/>
            <person name="Ehrlich S.D."/>
            <person name="Emmerson P.T."/>
            <person name="Entian K.-D."/>
            <person name="Errington J."/>
            <person name="Fabret C."/>
            <person name="Ferrari E."/>
            <person name="Foulger D."/>
            <person name="Fritz C."/>
            <person name="Fujita M."/>
            <person name="Fujita Y."/>
            <person name="Fuma S."/>
            <person name="Galizzi A."/>
            <person name="Galleron N."/>
            <person name="Ghim S.-Y."/>
            <person name="Glaser P."/>
            <person name="Goffeau A."/>
            <person name="Golightly E.J."/>
            <person name="Grandi G."/>
            <person name="Guiseppi G."/>
            <person name="Guy B.J."/>
            <person name="Haga K."/>
            <person name="Haiech J."/>
            <person name="Harwood C.R."/>
            <person name="Henaut A."/>
            <person name="Hilbert H."/>
            <person name="Holsappel S."/>
            <person name="Hosono S."/>
            <person name="Hullo M.-F."/>
            <person name="Itaya M."/>
            <person name="Jones L.-M."/>
            <person name="Joris B."/>
            <person name="Karamata D."/>
            <person name="Kasahara Y."/>
            <person name="Klaerr-Blanchard M."/>
            <person name="Klein C."/>
            <person name="Kobayashi Y."/>
            <person name="Koetter P."/>
            <person name="Koningstein G."/>
            <person name="Krogh S."/>
            <person name="Kumano M."/>
            <person name="Kurita K."/>
            <person name="Lapidus A."/>
            <person name="Lardinois S."/>
            <person name="Lauber J."/>
            <person name="Lazarevic V."/>
            <person name="Lee S.-M."/>
            <person name="Levine A."/>
            <person name="Liu H."/>
            <person name="Masuda S."/>
            <person name="Mauel C."/>
            <person name="Medigue C."/>
            <person name="Medina N."/>
            <person name="Mellado R.P."/>
            <person name="Mizuno M."/>
            <person name="Moestl D."/>
            <person name="Nakai S."/>
            <person name="Noback M."/>
            <person name="Noone D."/>
            <person name="O'Reilly M."/>
            <person name="Ogawa K."/>
            <person name="Ogiwara A."/>
            <person name="Oudega B."/>
            <person name="Park S.-H."/>
            <person name="Parro V."/>
            <person name="Pohl T.M."/>
            <person name="Portetelle D."/>
            <person name="Porwollik S."/>
            <person name="Prescott A.M."/>
            <person name="Presecan E."/>
            <person name="Pujic P."/>
            <person name="Purnelle B."/>
            <person name="Rapoport G."/>
            <person name="Rey M."/>
            <person name="Reynolds S."/>
            <person name="Rieger M."/>
            <person name="Rivolta C."/>
            <person name="Rocha E."/>
            <person name="Roche B."/>
            <person name="Rose M."/>
            <person name="Sadaie Y."/>
            <person name="Sato T."/>
            <person name="Scanlan E."/>
            <person name="Schleich S."/>
            <person name="Schroeter R."/>
            <person name="Scoffone F."/>
            <person name="Sekiguchi J."/>
            <person name="Sekowska A."/>
            <person name="Seror S.J."/>
            <person name="Serror P."/>
            <person name="Shin B.-S."/>
            <person name="Soldo B."/>
            <person name="Sorokin A."/>
            <person name="Tacconi E."/>
            <person name="Takagi T."/>
            <person name="Takahashi H."/>
            <person name="Takemaru K."/>
            <person name="Takeuchi M."/>
            <person name="Tamakoshi A."/>
            <person name="Tanaka T."/>
            <person name="Terpstra P."/>
            <person name="Tognoni A."/>
            <person name="Tosato V."/>
            <person name="Uchiyama S."/>
            <person name="Vandenbol M."/>
            <person name="Vannier F."/>
            <person name="Vassarotti A."/>
            <person name="Viari A."/>
            <person name="Wambutt R."/>
            <person name="Wedler E."/>
            <person name="Wedler H."/>
            <person name="Weitzenegger T."/>
            <person name="Winters P."/>
            <person name="Wipat A."/>
            <person name="Yamamoto H."/>
            <person name="Yamane K."/>
            <person name="Yasumoto K."/>
            <person name="Yata K."/>
            <person name="Yoshida K."/>
            <person name="Yoshikawa H.-F."/>
            <person name="Zumstein E."/>
            <person name="Yoshikawa H."/>
            <person name="Danchin A."/>
        </authorList>
    </citation>
    <scope>NUCLEOTIDE SEQUENCE [LARGE SCALE GENOMIC DNA]</scope>
    <source>
        <strain>168</strain>
    </source>
</reference>
<gene>
    <name type="primary">yugF</name>
    <name type="ordered locus">BSU31420</name>
</gene>
<feature type="chain" id="PRO_0000360557" description="Uncharacterized hydrolase YugF">
    <location>
        <begin position="1"/>
        <end position="273"/>
    </location>
</feature>
<feature type="domain" description="AB hydrolase-1" evidence="2">
    <location>
        <begin position="29"/>
        <end position="131"/>
    </location>
</feature>
<feature type="active site" evidence="1">
    <location>
        <position position="102"/>
    </location>
</feature>
<feature type="active site" evidence="1">
    <location>
        <position position="254"/>
    </location>
</feature>
<comment type="similarity">
    <text evidence="3">Belongs to the DmpD/TodF/XylF esterase family.</text>
</comment>
<accession>O05235</accession>
<accession>Q795M5</accession>
<keyword id="KW-0378">Hydrolase</keyword>
<keyword id="KW-1185">Reference proteome</keyword>
<keyword id="KW-0719">Serine esterase</keyword>
<dbReference type="EC" id="3.1.-.-"/>
<dbReference type="EMBL" id="Z93934">
    <property type="protein sequence ID" value="CAB07918.1"/>
    <property type="molecule type" value="Genomic_DNA"/>
</dbReference>
<dbReference type="EMBL" id="AL009126">
    <property type="protein sequence ID" value="CAB15131.1"/>
    <property type="molecule type" value="Genomic_DNA"/>
</dbReference>
<dbReference type="PIR" id="E70010">
    <property type="entry name" value="E70010"/>
</dbReference>
<dbReference type="RefSeq" id="NP_391020.1">
    <property type="nucleotide sequence ID" value="NC_000964.3"/>
</dbReference>
<dbReference type="RefSeq" id="WP_003228858.1">
    <property type="nucleotide sequence ID" value="NZ_OZ025638.1"/>
</dbReference>
<dbReference type="SMR" id="O05235"/>
<dbReference type="FunCoup" id="O05235">
    <property type="interactions" value="389"/>
</dbReference>
<dbReference type="STRING" id="224308.BSU31420"/>
<dbReference type="ESTHER" id="bacsu-yugF">
    <property type="family name" value="Carbon-carbon_bond_hydrolase"/>
</dbReference>
<dbReference type="PaxDb" id="224308-BSU31420"/>
<dbReference type="EnsemblBacteria" id="CAB15131">
    <property type="protein sequence ID" value="CAB15131"/>
    <property type="gene ID" value="BSU_31420"/>
</dbReference>
<dbReference type="GeneID" id="937169"/>
<dbReference type="KEGG" id="bsu:BSU31420"/>
<dbReference type="PATRIC" id="fig|224308.179.peg.3406"/>
<dbReference type="eggNOG" id="COG2267">
    <property type="taxonomic scope" value="Bacteria"/>
</dbReference>
<dbReference type="InParanoid" id="O05235"/>
<dbReference type="OrthoDB" id="9797695at2"/>
<dbReference type="PhylomeDB" id="O05235"/>
<dbReference type="BioCyc" id="BSUB:BSU31420-MONOMER"/>
<dbReference type="Proteomes" id="UP000001570">
    <property type="component" value="Chromosome"/>
</dbReference>
<dbReference type="GO" id="GO:0052689">
    <property type="term" value="F:carboxylic ester hydrolase activity"/>
    <property type="evidence" value="ECO:0007669"/>
    <property type="project" value="UniProtKB-KW"/>
</dbReference>
<dbReference type="FunFam" id="3.40.50.1820:FF:000149">
    <property type="entry name" value="Alpha/beta hydrolase fold"/>
    <property type="match status" value="1"/>
</dbReference>
<dbReference type="Gene3D" id="3.40.50.1820">
    <property type="entry name" value="alpha/beta hydrolase"/>
    <property type="match status" value="1"/>
</dbReference>
<dbReference type="InterPro" id="IPR000073">
    <property type="entry name" value="AB_hydrolase_1"/>
</dbReference>
<dbReference type="InterPro" id="IPR029058">
    <property type="entry name" value="AB_hydrolase_fold"/>
</dbReference>
<dbReference type="InterPro" id="IPR000639">
    <property type="entry name" value="Epox_hydrolase-like"/>
</dbReference>
<dbReference type="PANTHER" id="PTHR46438">
    <property type="entry name" value="ALPHA/BETA-HYDROLASES SUPERFAMILY PROTEIN"/>
    <property type="match status" value="1"/>
</dbReference>
<dbReference type="PANTHER" id="PTHR46438:SF11">
    <property type="entry name" value="LIPASE-RELATED"/>
    <property type="match status" value="1"/>
</dbReference>
<dbReference type="Pfam" id="PF00561">
    <property type="entry name" value="Abhydrolase_1"/>
    <property type="match status" value="1"/>
</dbReference>
<dbReference type="PRINTS" id="PR00111">
    <property type="entry name" value="ABHYDROLASE"/>
</dbReference>
<dbReference type="PRINTS" id="PR00412">
    <property type="entry name" value="EPOXHYDRLASE"/>
</dbReference>
<dbReference type="SUPFAM" id="SSF53474">
    <property type="entry name" value="alpha/beta-Hydrolases"/>
    <property type="match status" value="1"/>
</dbReference>